<keyword id="KW-1267">Proteomics identification</keyword>
<keyword id="KW-1185">Reference proteome</keyword>
<keyword id="KW-0677">Repeat</keyword>
<keyword id="KW-0964">Secreted</keyword>
<keyword id="KW-0732">Signal</keyword>
<name>SDF2_HUMAN</name>
<comment type="subcellular location">
    <subcellularLocation>
        <location evidence="3">Secreted</location>
    </subcellularLocation>
</comment>
<protein>
    <recommendedName>
        <fullName>Stromal cell-derived factor 2</fullName>
        <shortName>SDF-2</shortName>
    </recommendedName>
</protein>
<accession>Q99470</accession>
<accession>Q9BQ79</accession>
<proteinExistence type="evidence at protein level"/>
<reference key="1">
    <citation type="journal article" date="1996" name="Gene">
        <title>Isolation and characterization of a novel secretory protein, stromal cell-derived factor-2 (SDF-2) using the signal sequence trap method.</title>
        <authorList>
            <person name="Hamada T."/>
            <person name="Tashiro K."/>
            <person name="Tada H."/>
            <person name="Inazawa J."/>
            <person name="Shirozu M."/>
            <person name="Shibahara K."/>
            <person name="Nakamura T."/>
            <person name="Martina N."/>
            <person name="Nakano T."/>
            <person name="Honjo T."/>
        </authorList>
    </citation>
    <scope>NUCLEOTIDE SEQUENCE [MRNA]</scope>
    <source>
        <tissue>Glioblastoma</tissue>
    </source>
</reference>
<reference key="2">
    <citation type="journal article" date="2004" name="Genome Res.">
        <title>The status, quality, and expansion of the NIH full-length cDNA project: the Mammalian Gene Collection (MGC).</title>
        <authorList>
            <consortium name="The MGC Project Team"/>
        </authorList>
    </citation>
    <scope>NUCLEOTIDE SEQUENCE [LARGE SCALE MRNA]</scope>
    <source>
        <tissue>Lung</tissue>
        <tissue>Ovary</tissue>
    </source>
</reference>
<reference key="3">
    <citation type="journal article" date="2011" name="BMC Syst. Biol.">
        <title>Initial characterization of the human central proteome.</title>
        <authorList>
            <person name="Burkard T.R."/>
            <person name="Planyavsky M."/>
            <person name="Kaupe I."/>
            <person name="Breitwieser F.P."/>
            <person name="Buerckstuemmer T."/>
            <person name="Bennett K.L."/>
            <person name="Superti-Furga G."/>
            <person name="Colinge J."/>
        </authorList>
    </citation>
    <scope>IDENTIFICATION BY MASS SPECTROMETRY [LARGE SCALE ANALYSIS]</scope>
</reference>
<reference key="4">
    <citation type="journal article" date="2015" name="Proteomics">
        <title>N-terminome analysis of the human mitochondrial proteome.</title>
        <authorList>
            <person name="Vaca Jacome A.S."/>
            <person name="Rabilloud T."/>
            <person name="Schaeffer-Reiss C."/>
            <person name="Rompais M."/>
            <person name="Ayoub D."/>
            <person name="Lane L."/>
            <person name="Bairoch A."/>
            <person name="Van Dorsselaer A."/>
            <person name="Carapito C."/>
        </authorList>
    </citation>
    <scope>CLEAVAGE OF SIGNAL PEPTIDE [LARGE SCALE ANALYSIS] AFTER ALA-18</scope>
    <scope>IDENTIFICATION BY MASS SPECTROMETRY [LARGE SCALE ANALYSIS]</scope>
</reference>
<dbReference type="EMBL" id="D50645">
    <property type="protein sequence ID" value="BAA09312.1"/>
    <property type="molecule type" value="mRNA"/>
</dbReference>
<dbReference type="EMBL" id="BC000500">
    <property type="protein sequence ID" value="AAH00500.1"/>
    <property type="molecule type" value="mRNA"/>
</dbReference>
<dbReference type="EMBL" id="BC001406">
    <property type="protein sequence ID" value="AAH01406.1"/>
    <property type="molecule type" value="mRNA"/>
</dbReference>
<dbReference type="CCDS" id="CCDS11238.1"/>
<dbReference type="PIR" id="JC5106">
    <property type="entry name" value="JC5106"/>
</dbReference>
<dbReference type="RefSeq" id="NP_008854.2">
    <property type="nucleotide sequence ID" value="NM_006923.3"/>
</dbReference>
<dbReference type="RefSeq" id="XP_047292472.1">
    <property type="nucleotide sequence ID" value="XM_047436516.1"/>
</dbReference>
<dbReference type="RefSeq" id="XP_054172852.1">
    <property type="nucleotide sequence ID" value="XM_054316877.1"/>
</dbReference>
<dbReference type="SMR" id="Q99470"/>
<dbReference type="BioGRID" id="112289">
    <property type="interactions" value="73"/>
</dbReference>
<dbReference type="CORUM" id="Q99470"/>
<dbReference type="FunCoup" id="Q99470">
    <property type="interactions" value="1377"/>
</dbReference>
<dbReference type="IntAct" id="Q99470">
    <property type="interactions" value="27"/>
</dbReference>
<dbReference type="STRING" id="9606.ENSP00000247020"/>
<dbReference type="DrugBank" id="DB02201">
    <property type="generic name" value="Malonate Ion"/>
</dbReference>
<dbReference type="GlyGen" id="Q99470">
    <property type="glycosylation" value="1 site, 1 O-linked glycan (1 site)"/>
</dbReference>
<dbReference type="iPTMnet" id="Q99470"/>
<dbReference type="PhosphoSitePlus" id="Q99470"/>
<dbReference type="SwissPalm" id="Q99470"/>
<dbReference type="BioMuta" id="SDF2"/>
<dbReference type="DMDM" id="116242785"/>
<dbReference type="jPOST" id="Q99470"/>
<dbReference type="MassIVE" id="Q99470"/>
<dbReference type="PaxDb" id="9606-ENSP00000247020"/>
<dbReference type="PeptideAtlas" id="Q99470"/>
<dbReference type="ProteomicsDB" id="78286"/>
<dbReference type="Pumba" id="Q99470"/>
<dbReference type="TopDownProteomics" id="Q99470"/>
<dbReference type="Antibodypedia" id="26439">
    <property type="antibodies" value="157 antibodies from 22 providers"/>
</dbReference>
<dbReference type="DNASU" id="6388"/>
<dbReference type="Ensembl" id="ENST00000247020.9">
    <property type="protein sequence ID" value="ENSP00000247020.3"/>
    <property type="gene ID" value="ENSG00000132581.10"/>
</dbReference>
<dbReference type="GeneID" id="6388"/>
<dbReference type="KEGG" id="hsa:6388"/>
<dbReference type="MANE-Select" id="ENST00000247020.9">
    <property type="protein sequence ID" value="ENSP00000247020.3"/>
    <property type="RefSeq nucleotide sequence ID" value="NM_006923.4"/>
    <property type="RefSeq protein sequence ID" value="NP_008854.2"/>
</dbReference>
<dbReference type="UCSC" id="uc002hbw.4">
    <property type="organism name" value="human"/>
</dbReference>
<dbReference type="AGR" id="HGNC:10675"/>
<dbReference type="CTD" id="6388"/>
<dbReference type="DisGeNET" id="6388"/>
<dbReference type="GeneCards" id="SDF2"/>
<dbReference type="HGNC" id="HGNC:10675">
    <property type="gene designation" value="SDF2"/>
</dbReference>
<dbReference type="HPA" id="ENSG00000132581">
    <property type="expression patterns" value="Low tissue specificity"/>
</dbReference>
<dbReference type="MIM" id="602934">
    <property type="type" value="gene"/>
</dbReference>
<dbReference type="neXtProt" id="NX_Q99470"/>
<dbReference type="OpenTargets" id="ENSG00000132581"/>
<dbReference type="PharmGKB" id="PA35603"/>
<dbReference type="VEuPathDB" id="HostDB:ENSG00000132581"/>
<dbReference type="eggNOG" id="KOG3358">
    <property type="taxonomic scope" value="Eukaryota"/>
</dbReference>
<dbReference type="GeneTree" id="ENSGT00940000158885"/>
<dbReference type="HOGENOM" id="CLU_078126_1_0_1"/>
<dbReference type="InParanoid" id="Q99470"/>
<dbReference type="OMA" id="NYWRAME"/>
<dbReference type="OrthoDB" id="5588846at2759"/>
<dbReference type="PAN-GO" id="Q99470">
    <property type="GO annotations" value="0 GO annotations based on evolutionary models"/>
</dbReference>
<dbReference type="PhylomeDB" id="Q99470"/>
<dbReference type="TreeFam" id="TF314557"/>
<dbReference type="PathwayCommons" id="Q99470"/>
<dbReference type="SignaLink" id="Q99470"/>
<dbReference type="BioGRID-ORCS" id="6388">
    <property type="hits" value="32 hits in 1163 CRISPR screens"/>
</dbReference>
<dbReference type="ChiTaRS" id="SDF2">
    <property type="organism name" value="human"/>
</dbReference>
<dbReference type="GenomeRNAi" id="6388"/>
<dbReference type="Pharos" id="Q99470">
    <property type="development level" value="Tbio"/>
</dbReference>
<dbReference type="PRO" id="PR:Q99470"/>
<dbReference type="Proteomes" id="UP000005640">
    <property type="component" value="Chromosome 17"/>
</dbReference>
<dbReference type="RNAct" id="Q99470">
    <property type="molecule type" value="protein"/>
</dbReference>
<dbReference type="Bgee" id="ENSG00000132581">
    <property type="expression patterns" value="Expressed in stromal cell of endometrium and 195 other cell types or tissues"/>
</dbReference>
<dbReference type="ExpressionAtlas" id="Q99470">
    <property type="expression patterns" value="baseline and differential"/>
</dbReference>
<dbReference type="GO" id="GO:0005783">
    <property type="term" value="C:endoplasmic reticulum"/>
    <property type="evidence" value="ECO:0000314"/>
    <property type="project" value="FlyBase"/>
</dbReference>
<dbReference type="GO" id="GO:0101031">
    <property type="term" value="C:protein folding chaperone complex"/>
    <property type="evidence" value="ECO:0000353"/>
    <property type="project" value="FlyBase"/>
</dbReference>
<dbReference type="GO" id="GO:0051787">
    <property type="term" value="F:misfolded protein binding"/>
    <property type="evidence" value="ECO:0000315"/>
    <property type="project" value="FlyBase"/>
</dbReference>
<dbReference type="GO" id="GO:0051085">
    <property type="term" value="P:chaperone cofactor-dependent protein refolding"/>
    <property type="evidence" value="ECO:0000315"/>
    <property type="project" value="FlyBase"/>
</dbReference>
<dbReference type="CDD" id="cd23293">
    <property type="entry name" value="beta-trefoil_MIR_SDF2_meta"/>
    <property type="match status" value="1"/>
</dbReference>
<dbReference type="FunFam" id="2.80.10.50:FF:000023">
    <property type="entry name" value="Stromal cell-derived factor 2-like 1"/>
    <property type="match status" value="1"/>
</dbReference>
<dbReference type="Gene3D" id="2.80.10.50">
    <property type="match status" value="1"/>
</dbReference>
<dbReference type="InterPro" id="IPR036300">
    <property type="entry name" value="MIR_dom_sf"/>
</dbReference>
<dbReference type="InterPro" id="IPR016093">
    <property type="entry name" value="MIR_motif"/>
</dbReference>
<dbReference type="PANTHER" id="PTHR46809:SF3">
    <property type="entry name" value="STROMAL CELL-DERIVED FACTOR 2"/>
    <property type="match status" value="1"/>
</dbReference>
<dbReference type="PANTHER" id="PTHR46809">
    <property type="entry name" value="STROMAL CELL-DERIVED FACTOR 2-LIKE PROTEIN"/>
    <property type="match status" value="1"/>
</dbReference>
<dbReference type="Pfam" id="PF02815">
    <property type="entry name" value="MIR"/>
    <property type="match status" value="1"/>
</dbReference>
<dbReference type="SMART" id="SM00472">
    <property type="entry name" value="MIR"/>
    <property type="match status" value="3"/>
</dbReference>
<dbReference type="SUPFAM" id="SSF82109">
    <property type="entry name" value="MIR domain"/>
    <property type="match status" value="1"/>
</dbReference>
<dbReference type="PROSITE" id="PS50919">
    <property type="entry name" value="MIR"/>
    <property type="match status" value="3"/>
</dbReference>
<feature type="signal peptide" evidence="1 4">
    <location>
        <begin position="1"/>
        <end position="18"/>
    </location>
</feature>
<feature type="chain" id="PRO_0000031955" description="Stromal cell-derived factor 2">
    <location>
        <begin position="19"/>
        <end position="211"/>
    </location>
</feature>
<feature type="domain" description="MIR 1" evidence="2">
    <location>
        <begin position="21"/>
        <end position="75"/>
    </location>
</feature>
<feature type="domain" description="MIR 2" evidence="2">
    <location>
        <begin position="83"/>
        <end position="138"/>
    </location>
</feature>
<feature type="domain" description="MIR 3" evidence="2">
    <location>
        <begin position="139"/>
        <end position="193"/>
    </location>
</feature>
<feature type="sequence variant" id="VAR_051913" description="In dbSNP:rs35404078.">
    <original>A</original>
    <variation>T</variation>
    <location>
        <position position="15"/>
    </location>
</feature>
<feature type="sequence conflict" description="In Ref. 1; BAA09312." evidence="3" ref="1">
    <original>G</original>
    <variation>S</variation>
    <location>
        <position position="51"/>
    </location>
</feature>
<feature type="sequence conflict" description="In Ref. 1; BAA09312." evidence="3" ref="1">
    <original>G</original>
    <variation>R</variation>
    <location>
        <position position="74"/>
    </location>
</feature>
<feature type="sequence conflict" description="In Ref. 1; BAA09312." evidence="3" ref="1">
    <original>S</original>
    <variation>T</variation>
    <location>
        <position position="119"/>
    </location>
</feature>
<sequence>MAVVPLLLLGGLWSAVGASSLGVVTCGSVVKLLNTRHNVRLHSHDVRYGSGSGQQSVTGVTSVDDSNSYWRIRGKSATVCERGTPIKCGQPIRLTHVNTGRNLHSHHFTSPLSGNQEVSAFGEEGEGDYLDDWTVLCNGPYWVRDGEVRFKHSSTEVLLSVTGEQYGRPISGQKEVHGMAQPSQNNYWKAMEGIFMKPSELLKAEAHHAEL</sequence>
<gene>
    <name type="primary">SDF2</name>
</gene>
<evidence type="ECO:0000255" key="1"/>
<evidence type="ECO:0000255" key="2">
    <source>
        <dbReference type="PROSITE-ProRule" id="PRU00131"/>
    </source>
</evidence>
<evidence type="ECO:0000305" key="3"/>
<evidence type="ECO:0007744" key="4">
    <source>
    </source>
</evidence>
<organism>
    <name type="scientific">Homo sapiens</name>
    <name type="common">Human</name>
    <dbReference type="NCBI Taxonomy" id="9606"/>
    <lineage>
        <taxon>Eukaryota</taxon>
        <taxon>Metazoa</taxon>
        <taxon>Chordata</taxon>
        <taxon>Craniata</taxon>
        <taxon>Vertebrata</taxon>
        <taxon>Euteleostomi</taxon>
        <taxon>Mammalia</taxon>
        <taxon>Eutheria</taxon>
        <taxon>Euarchontoglires</taxon>
        <taxon>Primates</taxon>
        <taxon>Haplorrhini</taxon>
        <taxon>Catarrhini</taxon>
        <taxon>Hominidae</taxon>
        <taxon>Homo</taxon>
    </lineage>
</organism>